<protein>
    <recommendedName>
        <fullName>Erlin-2</fullName>
    </recommendedName>
    <alternativeName>
        <fullName>Endoplasmic reticulum lipid raft-associated protein 2</fullName>
    </alternativeName>
    <alternativeName>
        <fullName>Stomatin-prohibitin-flotillin-HflC/K domain-containing protein 2</fullName>
        <shortName>SPFH domain-containing protein 2</shortName>
    </alternativeName>
</protein>
<reference key="1">
    <citation type="journal article" date="2005" name="Science">
        <title>The transcriptional landscape of the mammalian genome.</title>
        <authorList>
            <person name="Carninci P."/>
            <person name="Kasukawa T."/>
            <person name="Katayama S."/>
            <person name="Gough J."/>
            <person name="Frith M.C."/>
            <person name="Maeda N."/>
            <person name="Oyama R."/>
            <person name="Ravasi T."/>
            <person name="Lenhard B."/>
            <person name="Wells C."/>
            <person name="Kodzius R."/>
            <person name="Shimokawa K."/>
            <person name="Bajic V.B."/>
            <person name="Brenner S.E."/>
            <person name="Batalov S."/>
            <person name="Forrest A.R."/>
            <person name="Zavolan M."/>
            <person name="Davis M.J."/>
            <person name="Wilming L.G."/>
            <person name="Aidinis V."/>
            <person name="Allen J.E."/>
            <person name="Ambesi-Impiombato A."/>
            <person name="Apweiler R."/>
            <person name="Aturaliya R.N."/>
            <person name="Bailey T.L."/>
            <person name="Bansal M."/>
            <person name="Baxter L."/>
            <person name="Beisel K.W."/>
            <person name="Bersano T."/>
            <person name="Bono H."/>
            <person name="Chalk A.M."/>
            <person name="Chiu K.P."/>
            <person name="Choudhary V."/>
            <person name="Christoffels A."/>
            <person name="Clutterbuck D.R."/>
            <person name="Crowe M.L."/>
            <person name="Dalla E."/>
            <person name="Dalrymple B.P."/>
            <person name="de Bono B."/>
            <person name="Della Gatta G."/>
            <person name="di Bernardo D."/>
            <person name="Down T."/>
            <person name="Engstrom P."/>
            <person name="Fagiolini M."/>
            <person name="Faulkner G."/>
            <person name="Fletcher C.F."/>
            <person name="Fukushima T."/>
            <person name="Furuno M."/>
            <person name="Futaki S."/>
            <person name="Gariboldi M."/>
            <person name="Georgii-Hemming P."/>
            <person name="Gingeras T.R."/>
            <person name="Gojobori T."/>
            <person name="Green R.E."/>
            <person name="Gustincich S."/>
            <person name="Harbers M."/>
            <person name="Hayashi Y."/>
            <person name="Hensch T.K."/>
            <person name="Hirokawa N."/>
            <person name="Hill D."/>
            <person name="Huminiecki L."/>
            <person name="Iacono M."/>
            <person name="Ikeo K."/>
            <person name="Iwama A."/>
            <person name="Ishikawa T."/>
            <person name="Jakt M."/>
            <person name="Kanapin A."/>
            <person name="Katoh M."/>
            <person name="Kawasawa Y."/>
            <person name="Kelso J."/>
            <person name="Kitamura H."/>
            <person name="Kitano H."/>
            <person name="Kollias G."/>
            <person name="Krishnan S.P."/>
            <person name="Kruger A."/>
            <person name="Kummerfeld S.K."/>
            <person name="Kurochkin I.V."/>
            <person name="Lareau L.F."/>
            <person name="Lazarevic D."/>
            <person name="Lipovich L."/>
            <person name="Liu J."/>
            <person name="Liuni S."/>
            <person name="McWilliam S."/>
            <person name="Madan Babu M."/>
            <person name="Madera M."/>
            <person name="Marchionni L."/>
            <person name="Matsuda H."/>
            <person name="Matsuzawa S."/>
            <person name="Miki H."/>
            <person name="Mignone F."/>
            <person name="Miyake S."/>
            <person name="Morris K."/>
            <person name="Mottagui-Tabar S."/>
            <person name="Mulder N."/>
            <person name="Nakano N."/>
            <person name="Nakauchi H."/>
            <person name="Ng P."/>
            <person name="Nilsson R."/>
            <person name="Nishiguchi S."/>
            <person name="Nishikawa S."/>
            <person name="Nori F."/>
            <person name="Ohara O."/>
            <person name="Okazaki Y."/>
            <person name="Orlando V."/>
            <person name="Pang K.C."/>
            <person name="Pavan W.J."/>
            <person name="Pavesi G."/>
            <person name="Pesole G."/>
            <person name="Petrovsky N."/>
            <person name="Piazza S."/>
            <person name="Reed J."/>
            <person name="Reid J.F."/>
            <person name="Ring B.Z."/>
            <person name="Ringwald M."/>
            <person name="Rost B."/>
            <person name="Ruan Y."/>
            <person name="Salzberg S.L."/>
            <person name="Sandelin A."/>
            <person name="Schneider C."/>
            <person name="Schoenbach C."/>
            <person name="Sekiguchi K."/>
            <person name="Semple C.A."/>
            <person name="Seno S."/>
            <person name="Sessa L."/>
            <person name="Sheng Y."/>
            <person name="Shibata Y."/>
            <person name="Shimada H."/>
            <person name="Shimada K."/>
            <person name="Silva D."/>
            <person name="Sinclair B."/>
            <person name="Sperling S."/>
            <person name="Stupka E."/>
            <person name="Sugiura K."/>
            <person name="Sultana R."/>
            <person name="Takenaka Y."/>
            <person name="Taki K."/>
            <person name="Tammoja K."/>
            <person name="Tan S.L."/>
            <person name="Tang S."/>
            <person name="Taylor M.S."/>
            <person name="Tegner J."/>
            <person name="Teichmann S.A."/>
            <person name="Ueda H.R."/>
            <person name="van Nimwegen E."/>
            <person name="Verardo R."/>
            <person name="Wei C.L."/>
            <person name="Yagi K."/>
            <person name="Yamanishi H."/>
            <person name="Zabarovsky E."/>
            <person name="Zhu S."/>
            <person name="Zimmer A."/>
            <person name="Hide W."/>
            <person name="Bult C."/>
            <person name="Grimmond S.M."/>
            <person name="Teasdale R.D."/>
            <person name="Liu E.T."/>
            <person name="Brusic V."/>
            <person name="Quackenbush J."/>
            <person name="Wahlestedt C."/>
            <person name="Mattick J.S."/>
            <person name="Hume D.A."/>
            <person name="Kai C."/>
            <person name="Sasaki D."/>
            <person name="Tomaru Y."/>
            <person name="Fukuda S."/>
            <person name="Kanamori-Katayama M."/>
            <person name="Suzuki M."/>
            <person name="Aoki J."/>
            <person name="Arakawa T."/>
            <person name="Iida J."/>
            <person name="Imamura K."/>
            <person name="Itoh M."/>
            <person name="Kato T."/>
            <person name="Kawaji H."/>
            <person name="Kawagashira N."/>
            <person name="Kawashima T."/>
            <person name="Kojima M."/>
            <person name="Kondo S."/>
            <person name="Konno H."/>
            <person name="Nakano K."/>
            <person name="Ninomiya N."/>
            <person name="Nishio T."/>
            <person name="Okada M."/>
            <person name="Plessy C."/>
            <person name="Shibata K."/>
            <person name="Shiraki T."/>
            <person name="Suzuki S."/>
            <person name="Tagami M."/>
            <person name="Waki K."/>
            <person name="Watahiki A."/>
            <person name="Okamura-Oho Y."/>
            <person name="Suzuki H."/>
            <person name="Kawai J."/>
            <person name="Hayashizaki Y."/>
        </authorList>
    </citation>
    <scope>NUCLEOTIDE SEQUENCE [LARGE SCALE MRNA]</scope>
    <source>
        <strain>C57BL/6J</strain>
        <tissue>Pituitary</tissue>
    </source>
</reference>
<reference key="2">
    <citation type="journal article" date="2004" name="Genome Res.">
        <title>The status, quality, and expansion of the NIH full-length cDNA project: the Mammalian Gene Collection (MGC).</title>
        <authorList>
            <consortium name="The MGC Project Team"/>
        </authorList>
    </citation>
    <scope>NUCLEOTIDE SEQUENCE [LARGE SCALE MRNA]</scope>
    <source>
        <strain>Czech II</strain>
        <strain>FVB/N</strain>
        <tissue>Mammary tumor</tissue>
    </source>
</reference>
<reference key="3">
    <citation type="journal article" date="2007" name="J. Biol. Chem.">
        <title>SPFH2 mediates the endoplasmic reticulum-associated degradation of inositol 1,4,5-trisphosphate receptors and other substrates in mammalian cells.</title>
        <authorList>
            <person name="Pearce M.M."/>
            <person name="Wang Y."/>
            <person name="Kelley G.G."/>
            <person name="Wojcikiewicz R.J.H."/>
        </authorList>
    </citation>
    <scope>INTERACTION WITH ITPR1</scope>
</reference>
<reference key="4">
    <citation type="journal article" date="2010" name="Cell">
        <title>A tissue-specific atlas of mouse protein phosphorylation and expression.</title>
        <authorList>
            <person name="Huttlin E.L."/>
            <person name="Jedrychowski M.P."/>
            <person name="Elias J.E."/>
            <person name="Goswami T."/>
            <person name="Rad R."/>
            <person name="Beausoleil S.A."/>
            <person name="Villen J."/>
            <person name="Haas W."/>
            <person name="Sowa M.E."/>
            <person name="Gygi S.P."/>
        </authorList>
    </citation>
    <scope>IDENTIFICATION BY MASS SPECTROMETRY [LARGE SCALE ANALYSIS]</scope>
    <source>
        <tissue>Brain</tissue>
        <tissue>Brown adipose tissue</tissue>
        <tissue>Heart</tissue>
        <tissue>Kidney</tissue>
        <tissue>Liver</tissue>
        <tissue>Lung</tissue>
        <tissue>Pancreas</tissue>
        <tissue>Spleen</tissue>
        <tissue>Testis</tissue>
    </source>
</reference>
<reference key="5">
    <citation type="journal article" date="2011" name="J. Biol. Chem.">
        <title>RNF170 protein, an endoplasmic reticulum membrane ubiquitin ligase, mediates inositol 1,4,5-trisphosphate receptor ubiquitination and degradation.</title>
        <authorList>
            <person name="Lu J.P."/>
            <person name="Wang Y."/>
            <person name="Sliter D.A."/>
            <person name="Pearce M.M."/>
            <person name="Wojcikiewicz R.J."/>
        </authorList>
    </citation>
    <scope>INTERACTION WITH RNF170</scope>
</reference>
<reference key="6">
    <citation type="journal article" date="2015" name="Elife">
        <title>The critical role of membralin in postnatal motor neuron survival and disease.</title>
        <authorList>
            <person name="Yang B."/>
            <person name="Qu M."/>
            <person name="Wang R."/>
            <person name="Chatterton J.E."/>
            <person name="Liu X.B."/>
            <person name="Zhu B."/>
            <person name="Narisawa S."/>
            <person name="Millan J.L."/>
            <person name="Nakanishi N."/>
            <person name="Swoboda K."/>
            <person name="Lipton S.A."/>
            <person name="Zhang D."/>
        </authorList>
    </citation>
    <scope>INTERACTION WITH TMEM259</scope>
</reference>
<proteinExistence type="evidence at protein level"/>
<evidence type="ECO:0000250" key="1"/>
<evidence type="ECO:0000250" key="2">
    <source>
        <dbReference type="UniProtKB" id="O75477"/>
    </source>
</evidence>
<evidence type="ECO:0000250" key="3">
    <source>
        <dbReference type="UniProtKB" id="O94905"/>
    </source>
</evidence>
<evidence type="ECO:0000255" key="4"/>
<evidence type="ECO:0000269" key="5">
    <source>
    </source>
</evidence>
<evidence type="ECO:0000269" key="6">
    <source>
    </source>
</evidence>
<evidence type="ECO:0000269" key="7">
    <source>
    </source>
</evidence>
<evidence type="ECO:0000305" key="8"/>
<gene>
    <name type="primary">Erlin2</name>
    <name type="synonym">Spfh2</name>
</gene>
<dbReference type="EMBL" id="AK030557">
    <property type="protein sequence ID" value="BAC27019.1"/>
    <property type="molecule type" value="mRNA"/>
</dbReference>
<dbReference type="EMBL" id="BC036333">
    <property type="protein sequence ID" value="AAH36333.1"/>
    <property type="molecule type" value="mRNA"/>
</dbReference>
<dbReference type="EMBL" id="BC038374">
    <property type="protein sequence ID" value="AAH38374.1"/>
    <property type="molecule type" value="mRNA"/>
</dbReference>
<dbReference type="CCDS" id="CCDS22209.1"/>
<dbReference type="RefSeq" id="NP_001351405.1">
    <property type="nucleotide sequence ID" value="NM_001364476.1"/>
</dbReference>
<dbReference type="RefSeq" id="NP_001366104.1">
    <property type="nucleotide sequence ID" value="NM_001379175.1"/>
</dbReference>
<dbReference type="RefSeq" id="NP_001366105.1">
    <property type="nucleotide sequence ID" value="NM_001379176.1"/>
</dbReference>
<dbReference type="RefSeq" id="NP_001391043.1">
    <property type="nucleotide sequence ID" value="NM_001404114.1"/>
</dbReference>
<dbReference type="RefSeq" id="NP_705820.1">
    <property type="nucleotide sequence ID" value="NM_153592.3"/>
</dbReference>
<dbReference type="RefSeq" id="XP_006509179.1">
    <property type="nucleotide sequence ID" value="XM_006509116.2"/>
</dbReference>
<dbReference type="RefSeq" id="XP_006509180.1">
    <property type="nucleotide sequence ID" value="XM_006509117.1"/>
</dbReference>
<dbReference type="SMR" id="Q8BFZ9"/>
<dbReference type="BioGRID" id="232642">
    <property type="interactions" value="14"/>
</dbReference>
<dbReference type="FunCoup" id="Q8BFZ9">
    <property type="interactions" value="2522"/>
</dbReference>
<dbReference type="IntAct" id="Q8BFZ9">
    <property type="interactions" value="7"/>
</dbReference>
<dbReference type="MINT" id="Q8BFZ9"/>
<dbReference type="STRING" id="10090.ENSMUSP00000033873"/>
<dbReference type="GlyConnect" id="2301">
    <property type="glycosylation" value="2 N-Linked glycans (1 site)"/>
</dbReference>
<dbReference type="GlyCosmos" id="Q8BFZ9">
    <property type="glycosylation" value="1 site, 2 glycans"/>
</dbReference>
<dbReference type="GlyGen" id="Q8BFZ9">
    <property type="glycosylation" value="2 sites, 3 N-linked glycans (1 site), 1 O-linked glycan (1 site)"/>
</dbReference>
<dbReference type="iPTMnet" id="Q8BFZ9"/>
<dbReference type="PhosphoSitePlus" id="Q8BFZ9"/>
<dbReference type="SwissPalm" id="Q8BFZ9"/>
<dbReference type="jPOST" id="Q8BFZ9"/>
<dbReference type="PaxDb" id="10090-ENSMUSP00000033873"/>
<dbReference type="PeptideAtlas" id="Q8BFZ9"/>
<dbReference type="ProteomicsDB" id="275538"/>
<dbReference type="Pumba" id="Q8BFZ9"/>
<dbReference type="Antibodypedia" id="719">
    <property type="antibodies" value="259 antibodies from 32 providers"/>
</dbReference>
<dbReference type="DNASU" id="244373"/>
<dbReference type="Ensembl" id="ENSMUST00000033873.9">
    <property type="protein sequence ID" value="ENSMUSP00000033873.8"/>
    <property type="gene ID" value="ENSMUSG00000031483.9"/>
</dbReference>
<dbReference type="GeneID" id="244373"/>
<dbReference type="KEGG" id="mmu:244373"/>
<dbReference type="UCSC" id="uc009lhr.2">
    <property type="organism name" value="mouse"/>
</dbReference>
<dbReference type="AGR" id="MGI:2387215"/>
<dbReference type="CTD" id="11160"/>
<dbReference type="MGI" id="MGI:2387215">
    <property type="gene designation" value="Erlin2"/>
</dbReference>
<dbReference type="VEuPathDB" id="HostDB:ENSMUSG00000031483"/>
<dbReference type="eggNOG" id="KOG2962">
    <property type="taxonomic scope" value="Eukaryota"/>
</dbReference>
<dbReference type="GeneTree" id="ENSGT00390000014666"/>
<dbReference type="HOGENOM" id="CLU_058701_0_0_1"/>
<dbReference type="InParanoid" id="Q8BFZ9"/>
<dbReference type="OMA" id="YNMVRNF"/>
<dbReference type="OrthoDB" id="77368at2759"/>
<dbReference type="PhylomeDB" id="Q8BFZ9"/>
<dbReference type="TreeFam" id="TF313059"/>
<dbReference type="Reactome" id="R-MMU-382556">
    <property type="pathway name" value="ABC-family proteins mediated transport"/>
</dbReference>
<dbReference type="BioGRID-ORCS" id="244373">
    <property type="hits" value="5 hits in 82 CRISPR screens"/>
</dbReference>
<dbReference type="CD-CODE" id="CE726F99">
    <property type="entry name" value="Postsynaptic density"/>
</dbReference>
<dbReference type="ChiTaRS" id="Erlin2">
    <property type="organism name" value="mouse"/>
</dbReference>
<dbReference type="PRO" id="PR:Q8BFZ9"/>
<dbReference type="Proteomes" id="UP000000589">
    <property type="component" value="Chromosome 8"/>
</dbReference>
<dbReference type="RNAct" id="Q8BFZ9">
    <property type="molecule type" value="protein"/>
</dbReference>
<dbReference type="Bgee" id="ENSMUSG00000031483">
    <property type="expression patterns" value="Expressed in spermatocyte and 220 other cell types or tissues"/>
</dbReference>
<dbReference type="ExpressionAtlas" id="Q8BFZ9">
    <property type="expression patterns" value="baseline and differential"/>
</dbReference>
<dbReference type="GO" id="GO:0005829">
    <property type="term" value="C:cytosol"/>
    <property type="evidence" value="ECO:0007669"/>
    <property type="project" value="Ensembl"/>
</dbReference>
<dbReference type="GO" id="GO:0005789">
    <property type="term" value="C:endoplasmic reticulum membrane"/>
    <property type="evidence" value="ECO:0000250"/>
    <property type="project" value="UniProtKB"/>
</dbReference>
<dbReference type="GO" id="GO:0045121">
    <property type="term" value="C:membrane raft"/>
    <property type="evidence" value="ECO:0007669"/>
    <property type="project" value="Ensembl"/>
</dbReference>
<dbReference type="GO" id="GO:0005886">
    <property type="term" value="C:plasma membrane"/>
    <property type="evidence" value="ECO:0007669"/>
    <property type="project" value="Ensembl"/>
</dbReference>
<dbReference type="GO" id="GO:0032991">
    <property type="term" value="C:protein-containing complex"/>
    <property type="evidence" value="ECO:0000266"/>
    <property type="project" value="MGI"/>
</dbReference>
<dbReference type="GO" id="GO:0031625">
    <property type="term" value="F:ubiquitin protein ligase binding"/>
    <property type="evidence" value="ECO:0007669"/>
    <property type="project" value="Ensembl"/>
</dbReference>
<dbReference type="GO" id="GO:0008203">
    <property type="term" value="P:cholesterol metabolic process"/>
    <property type="evidence" value="ECO:0007669"/>
    <property type="project" value="UniProtKB-KW"/>
</dbReference>
<dbReference type="GO" id="GO:0036503">
    <property type="term" value="P:ERAD pathway"/>
    <property type="evidence" value="ECO:0007669"/>
    <property type="project" value="Ensembl"/>
</dbReference>
<dbReference type="GO" id="GO:0045541">
    <property type="term" value="P:negative regulation of cholesterol biosynthetic process"/>
    <property type="evidence" value="ECO:0007669"/>
    <property type="project" value="Ensembl"/>
</dbReference>
<dbReference type="GO" id="GO:0045717">
    <property type="term" value="P:negative regulation of fatty acid biosynthetic process"/>
    <property type="evidence" value="ECO:0007669"/>
    <property type="project" value="Ensembl"/>
</dbReference>
<dbReference type="GO" id="GO:0032933">
    <property type="term" value="P:SREBP signaling pathway"/>
    <property type="evidence" value="ECO:0007669"/>
    <property type="project" value="Ensembl"/>
</dbReference>
<dbReference type="CDD" id="cd03406">
    <property type="entry name" value="SPFH_like_u3"/>
    <property type="match status" value="1"/>
</dbReference>
<dbReference type="FunFam" id="3.30.479.30:FF:000009">
    <property type="entry name" value="Erlin-2 isoform 1"/>
    <property type="match status" value="1"/>
</dbReference>
<dbReference type="Gene3D" id="3.30.479.30">
    <property type="entry name" value="Band 7 domain"/>
    <property type="match status" value="1"/>
</dbReference>
<dbReference type="InterPro" id="IPR001107">
    <property type="entry name" value="Band_7"/>
</dbReference>
<dbReference type="InterPro" id="IPR036013">
    <property type="entry name" value="Band_7/SPFH_dom_sf"/>
</dbReference>
<dbReference type="InterPro" id="IPR033294">
    <property type="entry name" value="Erlin1/2"/>
</dbReference>
<dbReference type="PANTHER" id="PTHR15351">
    <property type="entry name" value="ERLIN (ER LIPID RAFT ASSOCIATED PROTEIN) HOMOLOG"/>
    <property type="match status" value="1"/>
</dbReference>
<dbReference type="PANTHER" id="PTHR15351:SF4">
    <property type="entry name" value="ERLIN-2"/>
    <property type="match status" value="1"/>
</dbReference>
<dbReference type="Pfam" id="PF01145">
    <property type="entry name" value="Band_7"/>
    <property type="match status" value="1"/>
</dbReference>
<dbReference type="SMART" id="SM00244">
    <property type="entry name" value="PHB"/>
    <property type="match status" value="1"/>
</dbReference>
<accession>Q8BFZ9</accession>
<accession>Q8BML8</accession>
<organism>
    <name type="scientific">Mus musculus</name>
    <name type="common">Mouse</name>
    <dbReference type="NCBI Taxonomy" id="10090"/>
    <lineage>
        <taxon>Eukaryota</taxon>
        <taxon>Metazoa</taxon>
        <taxon>Chordata</taxon>
        <taxon>Craniata</taxon>
        <taxon>Vertebrata</taxon>
        <taxon>Euteleostomi</taxon>
        <taxon>Mammalia</taxon>
        <taxon>Eutheria</taxon>
        <taxon>Euarchontoglires</taxon>
        <taxon>Glires</taxon>
        <taxon>Rodentia</taxon>
        <taxon>Myomorpha</taxon>
        <taxon>Muroidea</taxon>
        <taxon>Muridae</taxon>
        <taxon>Murinae</taxon>
        <taxon>Mus</taxon>
        <taxon>Mus</taxon>
    </lineage>
</organism>
<keyword id="KW-0007">Acetylation</keyword>
<keyword id="KW-0153">Cholesterol metabolism</keyword>
<keyword id="KW-0256">Endoplasmic reticulum</keyword>
<keyword id="KW-0325">Glycoprotein</keyword>
<keyword id="KW-0443">Lipid metabolism</keyword>
<keyword id="KW-0472">Membrane</keyword>
<keyword id="KW-1185">Reference proteome</keyword>
<keyword id="KW-0735">Signal-anchor</keyword>
<keyword id="KW-0753">Steroid metabolism</keyword>
<keyword id="KW-1207">Sterol metabolism</keyword>
<keyword id="KW-0812">Transmembrane</keyword>
<keyword id="KW-1133">Transmembrane helix</keyword>
<sequence>MAQLGAVVAVASSFFCASLFSAVHKIEEGHIGVYYRGGALLTSTSGPGFHLMLPFITSYKSVQTTLQTDEVKNVPCGTSGGVMIYFDRIEVVNFLVPNAVYDIVKNYTADYDKALIFNKIHHELNQFCSVHTLQEVYIELFDQIDENLKLALQQDLTSMAPGLVIQAVRVTKPNIPEAIRRNYELMESEKTKLLIAAQKQKVVEKEAETERKKALIEAEKVAQVAEITYGQKVMEKETEKKISEIEDAAFLAREKAKADAECYTALKIAEANKLKLTPEYLQLMKYKAIASNSKIYFGKDIPNMFMDSAGGLGKQFEGLSDDKLGFGLEDEPLEAPTKEN</sequence>
<comment type="function">
    <text evidence="3">Component of the ERLIN1/ERLIN2 complex which mediates the endoplasmic reticulum-associated degradation (ERAD) of inositol 1,4,5-trisphosphate receptors (IP3Rs) such as ITPR1. Promotes sterol-accelerated ERAD of HMGCR probably implicating an AMFR/gp78-containing ubiquitin ligase complex. Involved in regulation of cellular cholesterol homeostasis by regulation the SREBP signaling pathway. May promote ER retention of the SCAP-SREBF complex (By similarity).</text>
</comment>
<comment type="subunit">
    <text evidence="3 5 6 7">Forms a heteromeric complex with ERLIN1 (By similarity). In complex with ERLIN1, interacts with RNF170 (PubMed:21610068). Interacts with activated ITPR1, independently of the degree of ITPR1 polyubiquitination (PubMed:17502376). Interacts with SCAP, INSIG1, SREBF1 and SREBF2 under cholesterol sufficiency conditions; indicative for an association with the SCAP-SREBP-INSIG complex (By similarity). Probably part of an AMFR/gp78 and INSIG1-containing ubiquitin ligase complex involved in ERAD of HMGCR (By similarity). Interacts with TMUB1; TMUB1 bridges the association with AMFR (By similarity). Interacts with SYVN1 and RNF139 (By similarity). Interacts with TMEM259 (PubMed:25977983). Interacts with TMEM41B (By similarity).</text>
</comment>
<comment type="subcellular location">
    <subcellularLocation>
        <location evidence="1">Endoplasmic reticulum membrane</location>
        <topology evidence="1">Single-pass type II membrane protein</topology>
    </subcellularLocation>
    <text evidence="1">Associated with lipid raft-like domains of the endoplasmic reticulum membrane.</text>
</comment>
<comment type="PTM">
    <text evidence="2">Deubiquitinated by USP25; leading to stabilization.</text>
</comment>
<comment type="similarity">
    <text evidence="8">Belongs to the band 7/mec-2 family.</text>
</comment>
<name>ERLN2_MOUSE</name>
<feature type="chain" id="PRO_0000002788" description="Erlin-2">
    <location>
        <begin position="1"/>
        <end position="340"/>
    </location>
</feature>
<feature type="topological domain" description="Cytoplasmic" evidence="4">
    <location>
        <begin position="1"/>
        <end position="3"/>
    </location>
</feature>
<feature type="transmembrane region" description="Helical" evidence="4">
    <location>
        <begin position="4"/>
        <end position="24"/>
    </location>
</feature>
<feature type="topological domain" description="Lumenal" evidence="4">
    <location>
        <begin position="25"/>
        <end position="340"/>
    </location>
</feature>
<feature type="region of interest" description="Interaction with ERLIN1" evidence="1">
    <location>
        <begin position="177"/>
        <end position="309"/>
    </location>
</feature>
<feature type="modified residue" description="N6-acetyllysine" evidence="2">
    <location>
        <position position="267"/>
    </location>
</feature>
<feature type="glycosylation site" description="N-linked (GlcNAc...) asparagine" evidence="4">
    <location>
        <position position="106"/>
    </location>
</feature>
<feature type="sequence conflict" description="In Ref. 1; BAC27019." evidence="8" ref="1">
    <original>L</original>
    <variation>Q</variation>
    <location>
        <position position="281"/>
    </location>
</feature>
<feature type="sequence conflict" description="In Ref. 1; BAC27019." evidence="8" ref="1">
    <original>M</original>
    <variation>I</variation>
    <location>
        <position position="304"/>
    </location>
</feature>